<feature type="chain" id="PRO_0000303300" description="tRNA N6-adenosine threonylcarbamoyltransferase">
    <location>
        <begin position="1"/>
        <end position="346"/>
    </location>
</feature>
<feature type="binding site" evidence="1">
    <location>
        <position position="111"/>
    </location>
    <ligand>
        <name>Fe cation</name>
        <dbReference type="ChEBI" id="CHEBI:24875"/>
    </ligand>
</feature>
<feature type="binding site" evidence="1">
    <location>
        <position position="115"/>
    </location>
    <ligand>
        <name>Fe cation</name>
        <dbReference type="ChEBI" id="CHEBI:24875"/>
    </ligand>
</feature>
<feature type="binding site" evidence="1">
    <location>
        <begin position="134"/>
        <end position="138"/>
    </location>
    <ligand>
        <name>substrate</name>
    </ligand>
</feature>
<feature type="binding site" evidence="1">
    <location>
        <position position="167"/>
    </location>
    <ligand>
        <name>substrate</name>
    </ligand>
</feature>
<feature type="binding site" evidence="1">
    <location>
        <position position="180"/>
    </location>
    <ligand>
        <name>substrate</name>
    </ligand>
</feature>
<feature type="binding site" evidence="1">
    <location>
        <position position="279"/>
    </location>
    <ligand>
        <name>substrate</name>
    </ligand>
</feature>
<feature type="binding site" evidence="1">
    <location>
        <position position="307"/>
    </location>
    <ligand>
        <name>Fe cation</name>
        <dbReference type="ChEBI" id="CHEBI:24875"/>
    </ligand>
</feature>
<organism>
    <name type="scientific">Burkholderia cenocepacia (strain HI2424)</name>
    <dbReference type="NCBI Taxonomy" id="331272"/>
    <lineage>
        <taxon>Bacteria</taxon>
        <taxon>Pseudomonadati</taxon>
        <taxon>Pseudomonadota</taxon>
        <taxon>Betaproteobacteria</taxon>
        <taxon>Burkholderiales</taxon>
        <taxon>Burkholderiaceae</taxon>
        <taxon>Burkholderia</taxon>
        <taxon>Burkholderia cepacia complex</taxon>
    </lineage>
</organism>
<gene>
    <name evidence="1" type="primary">tsaD</name>
    <name type="synonym">gcp</name>
    <name type="ordered locus">Bcen2424_3881</name>
</gene>
<protein>
    <recommendedName>
        <fullName evidence="1">tRNA N6-adenosine threonylcarbamoyltransferase</fullName>
        <ecNumber evidence="1">2.3.1.234</ecNumber>
    </recommendedName>
    <alternativeName>
        <fullName evidence="1">N6-L-threonylcarbamoyladenine synthase</fullName>
        <shortName evidence="1">t(6)A synthase</shortName>
    </alternativeName>
    <alternativeName>
        <fullName evidence="1">t(6)A37 threonylcarbamoyladenosine biosynthesis protein TsaD</fullName>
    </alternativeName>
    <alternativeName>
        <fullName evidence="1">tRNA threonylcarbamoyladenosine biosynthesis protein TsaD</fullName>
    </alternativeName>
</protein>
<dbReference type="EC" id="2.3.1.234" evidence="1"/>
<dbReference type="EMBL" id="CP000459">
    <property type="protein sequence ID" value="ABK10618.1"/>
    <property type="molecule type" value="Genomic_DNA"/>
</dbReference>
<dbReference type="RefSeq" id="WP_011548147.1">
    <property type="nucleotide sequence ID" value="NC_008543.1"/>
</dbReference>
<dbReference type="SMR" id="A0AYZ2"/>
<dbReference type="GeneID" id="83050423"/>
<dbReference type="KEGG" id="bch:Bcen2424_3881"/>
<dbReference type="HOGENOM" id="CLU_023208_0_2_4"/>
<dbReference type="GO" id="GO:0005737">
    <property type="term" value="C:cytoplasm"/>
    <property type="evidence" value="ECO:0007669"/>
    <property type="project" value="UniProtKB-SubCell"/>
</dbReference>
<dbReference type="GO" id="GO:0005506">
    <property type="term" value="F:iron ion binding"/>
    <property type="evidence" value="ECO:0007669"/>
    <property type="project" value="UniProtKB-UniRule"/>
</dbReference>
<dbReference type="GO" id="GO:0061711">
    <property type="term" value="F:N(6)-L-threonylcarbamoyladenine synthase activity"/>
    <property type="evidence" value="ECO:0007669"/>
    <property type="project" value="UniProtKB-EC"/>
</dbReference>
<dbReference type="GO" id="GO:0002949">
    <property type="term" value="P:tRNA threonylcarbamoyladenosine modification"/>
    <property type="evidence" value="ECO:0007669"/>
    <property type="project" value="UniProtKB-UniRule"/>
</dbReference>
<dbReference type="CDD" id="cd24133">
    <property type="entry name" value="ASKHA_NBD_TsaD_bac"/>
    <property type="match status" value="1"/>
</dbReference>
<dbReference type="FunFam" id="3.30.420.40:FF:000012">
    <property type="entry name" value="tRNA N6-adenosine threonylcarbamoyltransferase"/>
    <property type="match status" value="1"/>
</dbReference>
<dbReference type="FunFam" id="3.30.420.40:FF:000040">
    <property type="entry name" value="tRNA N6-adenosine threonylcarbamoyltransferase"/>
    <property type="match status" value="1"/>
</dbReference>
<dbReference type="Gene3D" id="3.30.420.40">
    <property type="match status" value="2"/>
</dbReference>
<dbReference type="HAMAP" id="MF_01445">
    <property type="entry name" value="TsaD"/>
    <property type="match status" value="1"/>
</dbReference>
<dbReference type="InterPro" id="IPR043129">
    <property type="entry name" value="ATPase_NBD"/>
</dbReference>
<dbReference type="InterPro" id="IPR000905">
    <property type="entry name" value="Gcp-like_dom"/>
</dbReference>
<dbReference type="InterPro" id="IPR017861">
    <property type="entry name" value="KAE1/TsaD"/>
</dbReference>
<dbReference type="InterPro" id="IPR022450">
    <property type="entry name" value="TsaD"/>
</dbReference>
<dbReference type="NCBIfam" id="TIGR00329">
    <property type="entry name" value="gcp_kae1"/>
    <property type="match status" value="1"/>
</dbReference>
<dbReference type="NCBIfam" id="TIGR03723">
    <property type="entry name" value="T6A_TsaD_YgjD"/>
    <property type="match status" value="1"/>
</dbReference>
<dbReference type="PANTHER" id="PTHR11735">
    <property type="entry name" value="TRNA N6-ADENOSINE THREONYLCARBAMOYLTRANSFERASE"/>
    <property type="match status" value="1"/>
</dbReference>
<dbReference type="PANTHER" id="PTHR11735:SF6">
    <property type="entry name" value="TRNA N6-ADENOSINE THREONYLCARBAMOYLTRANSFERASE, MITOCHONDRIAL"/>
    <property type="match status" value="1"/>
</dbReference>
<dbReference type="Pfam" id="PF00814">
    <property type="entry name" value="TsaD"/>
    <property type="match status" value="1"/>
</dbReference>
<dbReference type="PRINTS" id="PR00789">
    <property type="entry name" value="OSIALOPTASE"/>
</dbReference>
<dbReference type="SUPFAM" id="SSF53067">
    <property type="entry name" value="Actin-like ATPase domain"/>
    <property type="match status" value="2"/>
</dbReference>
<evidence type="ECO:0000255" key="1">
    <source>
        <dbReference type="HAMAP-Rule" id="MF_01445"/>
    </source>
</evidence>
<reference key="1">
    <citation type="submission" date="2006-08" db="EMBL/GenBank/DDBJ databases">
        <title>Complete sequence of chromosome 2 of Burkholderia cenocepacia HI2424.</title>
        <authorList>
            <person name="Copeland A."/>
            <person name="Lucas S."/>
            <person name="Lapidus A."/>
            <person name="Barry K."/>
            <person name="Detter J.C."/>
            <person name="Glavina del Rio T."/>
            <person name="Hammon N."/>
            <person name="Israni S."/>
            <person name="Pitluck S."/>
            <person name="Chain P."/>
            <person name="Malfatti S."/>
            <person name="Shin M."/>
            <person name="Vergez L."/>
            <person name="Schmutz J."/>
            <person name="Larimer F."/>
            <person name="Land M."/>
            <person name="Hauser L."/>
            <person name="Kyrpides N."/>
            <person name="Kim E."/>
            <person name="LiPuma J.J."/>
            <person name="Gonzalez C.F."/>
            <person name="Konstantinidis K."/>
            <person name="Tiedje J.M."/>
            <person name="Richardson P."/>
        </authorList>
    </citation>
    <scope>NUCLEOTIDE SEQUENCE [LARGE SCALE GENOMIC DNA]</scope>
    <source>
        <strain>HI2424</strain>
    </source>
</reference>
<comment type="function">
    <text evidence="1">Required for the formation of a threonylcarbamoyl group on adenosine at position 37 (t(6)A37) in tRNAs that read codons beginning with adenine. Is involved in the transfer of the threonylcarbamoyl moiety of threonylcarbamoyl-AMP (TC-AMP) to the N6 group of A37, together with TsaE and TsaB. TsaD likely plays a direct catalytic role in this reaction.</text>
</comment>
<comment type="catalytic activity">
    <reaction evidence="1">
        <text>L-threonylcarbamoyladenylate + adenosine(37) in tRNA = N(6)-L-threonylcarbamoyladenosine(37) in tRNA + AMP + H(+)</text>
        <dbReference type="Rhea" id="RHEA:37059"/>
        <dbReference type="Rhea" id="RHEA-COMP:10162"/>
        <dbReference type="Rhea" id="RHEA-COMP:10163"/>
        <dbReference type="ChEBI" id="CHEBI:15378"/>
        <dbReference type="ChEBI" id="CHEBI:73682"/>
        <dbReference type="ChEBI" id="CHEBI:74411"/>
        <dbReference type="ChEBI" id="CHEBI:74418"/>
        <dbReference type="ChEBI" id="CHEBI:456215"/>
        <dbReference type="EC" id="2.3.1.234"/>
    </reaction>
</comment>
<comment type="cofactor">
    <cofactor evidence="1">
        <name>Fe(2+)</name>
        <dbReference type="ChEBI" id="CHEBI:29033"/>
    </cofactor>
    <text evidence="1">Binds 1 Fe(2+) ion per subunit.</text>
</comment>
<comment type="subcellular location">
    <subcellularLocation>
        <location evidence="1">Cytoplasm</location>
    </subcellularLocation>
</comment>
<comment type="similarity">
    <text evidence="1">Belongs to the KAE1 / TsaD family.</text>
</comment>
<name>TSAD_BURCH</name>
<keyword id="KW-0012">Acyltransferase</keyword>
<keyword id="KW-0963">Cytoplasm</keyword>
<keyword id="KW-0408">Iron</keyword>
<keyword id="KW-0479">Metal-binding</keyword>
<keyword id="KW-0808">Transferase</keyword>
<keyword id="KW-0819">tRNA processing</keyword>
<accession>A0AYZ2</accession>
<sequence length="346" mass="36402">MLVLGIESSCDETGLALYDTQRGLLAHALHSQIAMHRDYGGVVPELASRDHIRRALPLLEEVMAQSGTRRDDIDAIAFTQGPGLAGALLVGASIANALALAWNKPTVGIHHLEGHLLSPLLVDEPPPFPFVALLVSGGHTQLMRVTDVGVYETLGETLDDAAGEAFDKTAKLIGLGYPGGPEVSKLAETGTPGAVVLPRPMLHSGDLDFSFSGLKTAVLTQMKKFEAAKLDGEALERAKADLARGFVDAAVDVLVAKSLAALKKTKLKRLVVAGGVGANRQLRAALSAAAAKRGFDVHYPDLALCTDNGAMIALAGALRLGRWPEQANADYAFTVKPRWDLASLAG</sequence>
<proteinExistence type="inferred from homology"/>